<comment type="similarity">
    <text evidence="1">Belongs to the bacterial ribosomal protein bS16 family.</text>
</comment>
<protein>
    <recommendedName>
        <fullName evidence="1">Small ribosomal subunit protein bS16</fullName>
    </recommendedName>
    <alternativeName>
        <fullName evidence="3">30S ribosomal protein S16</fullName>
    </alternativeName>
</protein>
<reference key="1">
    <citation type="journal article" date="2007" name="PLoS Genet.">
        <title>Patterns and implications of gene gain and loss in the evolution of Prochlorococcus.</title>
        <authorList>
            <person name="Kettler G.C."/>
            <person name="Martiny A.C."/>
            <person name="Huang K."/>
            <person name="Zucker J."/>
            <person name="Coleman M.L."/>
            <person name="Rodrigue S."/>
            <person name="Chen F."/>
            <person name="Lapidus A."/>
            <person name="Ferriera S."/>
            <person name="Johnson J."/>
            <person name="Steglich C."/>
            <person name="Church G.M."/>
            <person name="Richardson P."/>
            <person name="Chisholm S.W."/>
        </authorList>
    </citation>
    <scope>NUCLEOTIDE SEQUENCE [LARGE SCALE GENOMIC DNA]</scope>
    <source>
        <strain>MIT 9211</strain>
    </source>
</reference>
<keyword id="KW-1185">Reference proteome</keyword>
<keyword id="KW-0687">Ribonucleoprotein</keyword>
<keyword id="KW-0689">Ribosomal protein</keyword>
<accession>A9BBQ1</accession>
<proteinExistence type="inferred from homology"/>
<organism>
    <name type="scientific">Prochlorococcus marinus (strain MIT 9211)</name>
    <dbReference type="NCBI Taxonomy" id="93059"/>
    <lineage>
        <taxon>Bacteria</taxon>
        <taxon>Bacillati</taxon>
        <taxon>Cyanobacteriota</taxon>
        <taxon>Cyanophyceae</taxon>
        <taxon>Synechococcales</taxon>
        <taxon>Prochlorococcaceae</taxon>
        <taxon>Prochlorococcus</taxon>
    </lineage>
</organism>
<feature type="chain" id="PRO_1000196455" description="Small ribosomal subunit protein bS16">
    <location>
        <begin position="1"/>
        <end position="125"/>
    </location>
</feature>
<feature type="region of interest" description="Disordered" evidence="2">
    <location>
        <begin position="87"/>
        <end position="125"/>
    </location>
</feature>
<feature type="compositionally biased region" description="Basic and acidic residues" evidence="2">
    <location>
        <begin position="103"/>
        <end position="115"/>
    </location>
</feature>
<evidence type="ECO:0000255" key="1">
    <source>
        <dbReference type="HAMAP-Rule" id="MF_00385"/>
    </source>
</evidence>
<evidence type="ECO:0000256" key="2">
    <source>
        <dbReference type="SAM" id="MobiDB-lite"/>
    </source>
</evidence>
<evidence type="ECO:0000305" key="3"/>
<name>RS16_PROM4</name>
<gene>
    <name evidence="1" type="primary">rpsP</name>
    <name evidence="1" type="synonym">rps16</name>
    <name type="ordered locus">P9211_13321</name>
</gene>
<dbReference type="EMBL" id="CP000878">
    <property type="protein sequence ID" value="ABX09263.1"/>
    <property type="molecule type" value="Genomic_DNA"/>
</dbReference>
<dbReference type="RefSeq" id="WP_012195884.1">
    <property type="nucleotide sequence ID" value="NC_009976.1"/>
</dbReference>
<dbReference type="SMR" id="A9BBQ1"/>
<dbReference type="STRING" id="93059.P9211_13321"/>
<dbReference type="KEGG" id="pmj:P9211_13321"/>
<dbReference type="eggNOG" id="COG0228">
    <property type="taxonomic scope" value="Bacteria"/>
</dbReference>
<dbReference type="HOGENOM" id="CLU_100590_3_2_3"/>
<dbReference type="OrthoDB" id="9807878at2"/>
<dbReference type="Proteomes" id="UP000000788">
    <property type="component" value="Chromosome"/>
</dbReference>
<dbReference type="GO" id="GO:0005737">
    <property type="term" value="C:cytoplasm"/>
    <property type="evidence" value="ECO:0007669"/>
    <property type="project" value="UniProtKB-ARBA"/>
</dbReference>
<dbReference type="GO" id="GO:0015935">
    <property type="term" value="C:small ribosomal subunit"/>
    <property type="evidence" value="ECO:0007669"/>
    <property type="project" value="TreeGrafter"/>
</dbReference>
<dbReference type="GO" id="GO:0003735">
    <property type="term" value="F:structural constituent of ribosome"/>
    <property type="evidence" value="ECO:0007669"/>
    <property type="project" value="InterPro"/>
</dbReference>
<dbReference type="GO" id="GO:0006412">
    <property type="term" value="P:translation"/>
    <property type="evidence" value="ECO:0007669"/>
    <property type="project" value="UniProtKB-UniRule"/>
</dbReference>
<dbReference type="Gene3D" id="3.30.1320.10">
    <property type="match status" value="1"/>
</dbReference>
<dbReference type="HAMAP" id="MF_00385">
    <property type="entry name" value="Ribosomal_bS16"/>
    <property type="match status" value="1"/>
</dbReference>
<dbReference type="InterPro" id="IPR000307">
    <property type="entry name" value="Ribosomal_bS16"/>
</dbReference>
<dbReference type="InterPro" id="IPR020592">
    <property type="entry name" value="Ribosomal_bS16_CS"/>
</dbReference>
<dbReference type="InterPro" id="IPR023803">
    <property type="entry name" value="Ribosomal_bS16_dom_sf"/>
</dbReference>
<dbReference type="NCBIfam" id="TIGR00002">
    <property type="entry name" value="S16"/>
    <property type="match status" value="1"/>
</dbReference>
<dbReference type="PANTHER" id="PTHR12919">
    <property type="entry name" value="30S RIBOSOMAL PROTEIN S16"/>
    <property type="match status" value="1"/>
</dbReference>
<dbReference type="PANTHER" id="PTHR12919:SF20">
    <property type="entry name" value="SMALL RIBOSOMAL SUBUNIT PROTEIN BS16M"/>
    <property type="match status" value="1"/>
</dbReference>
<dbReference type="Pfam" id="PF00886">
    <property type="entry name" value="Ribosomal_S16"/>
    <property type="match status" value="1"/>
</dbReference>
<dbReference type="SUPFAM" id="SSF54565">
    <property type="entry name" value="Ribosomal protein S16"/>
    <property type="match status" value="1"/>
</dbReference>
<dbReference type="PROSITE" id="PS00732">
    <property type="entry name" value="RIBOSOMAL_S16"/>
    <property type="match status" value="1"/>
</dbReference>
<sequence length="125" mass="13996">MIKLRLKRYGKKREASFRLVACNSTSRRDGRPLEELGFYNPRTKETRLDTEALRTRLSQGAQPTDAVRSLLEKGGLIEKTIRPAEIEGKKKQALARQSASKKAVKEKTEESKGSEVDSETSTSAD</sequence>